<sequence length="255" mass="29834">MEKCEGIVIRQTSYRESDKIVRMYTREFGKIGVVARGAKKTKSRLAAVTQLFTNGYFTFFGSNGLGTLQQGEVIENFSSIQQDIFMTAYATYVCELLDKATEERQPNPYLYELTFQILRDINEGYDPQILTQIFEMKMLPVLGLYPTMDKCAICGETTGHFDFSTSSNGIICHRCFEKDRYRMHLPENVVKLLRLFFIFQLDRLGNIDVKPETKEWLQKAIDTYYDEYSGLYLKSRKFLREMDKWENMLKKDSDD</sequence>
<keyword id="KW-0227">DNA damage</keyword>
<keyword id="KW-0233">DNA recombination</keyword>
<keyword id="KW-0234">DNA repair</keyword>
<protein>
    <recommendedName>
        <fullName evidence="1">DNA repair protein RecO</fullName>
    </recommendedName>
    <alternativeName>
        <fullName evidence="1">Recombination protein O</fullName>
    </alternativeName>
</protein>
<organism>
    <name type="scientific">Listeria monocytogenes serotype 4b (strain CLIP80459)</name>
    <dbReference type="NCBI Taxonomy" id="568819"/>
    <lineage>
        <taxon>Bacteria</taxon>
        <taxon>Bacillati</taxon>
        <taxon>Bacillota</taxon>
        <taxon>Bacilli</taxon>
        <taxon>Bacillales</taxon>
        <taxon>Listeriaceae</taxon>
        <taxon>Listeria</taxon>
    </lineage>
</organism>
<reference key="1">
    <citation type="journal article" date="2012" name="BMC Genomics">
        <title>Comparative genomics and transcriptomics of lineages I, II, and III strains of Listeria monocytogenes.</title>
        <authorList>
            <person name="Hain T."/>
            <person name="Ghai R."/>
            <person name="Billion A."/>
            <person name="Kuenne C.T."/>
            <person name="Steinweg C."/>
            <person name="Izar B."/>
            <person name="Mohamed W."/>
            <person name="Mraheil M."/>
            <person name="Domann E."/>
            <person name="Schaffrath S."/>
            <person name="Karst U."/>
            <person name="Goesmann A."/>
            <person name="Oehm S."/>
            <person name="Puhler A."/>
            <person name="Merkl R."/>
            <person name="Vorwerk S."/>
            <person name="Glaser P."/>
            <person name="Garrido P."/>
            <person name="Rusniok C."/>
            <person name="Buchrieser C."/>
            <person name="Goebel W."/>
            <person name="Chakraborty T."/>
        </authorList>
    </citation>
    <scope>NUCLEOTIDE SEQUENCE [LARGE SCALE GENOMIC DNA]</scope>
    <source>
        <strain>CLIP80459</strain>
    </source>
</reference>
<name>RECO_LISMC</name>
<dbReference type="EMBL" id="FM242711">
    <property type="protein sequence ID" value="CAS05232.1"/>
    <property type="molecule type" value="Genomic_DNA"/>
</dbReference>
<dbReference type="RefSeq" id="WP_003726013.1">
    <property type="nucleotide sequence ID" value="NC_012488.1"/>
</dbReference>
<dbReference type="SMR" id="C1KVA7"/>
<dbReference type="KEGG" id="lmc:Lm4b_01470"/>
<dbReference type="HOGENOM" id="CLU_066632_4_0_9"/>
<dbReference type="GO" id="GO:0043590">
    <property type="term" value="C:bacterial nucleoid"/>
    <property type="evidence" value="ECO:0007669"/>
    <property type="project" value="TreeGrafter"/>
</dbReference>
<dbReference type="GO" id="GO:0006310">
    <property type="term" value="P:DNA recombination"/>
    <property type="evidence" value="ECO:0007669"/>
    <property type="project" value="UniProtKB-UniRule"/>
</dbReference>
<dbReference type="GO" id="GO:0006302">
    <property type="term" value="P:double-strand break repair"/>
    <property type="evidence" value="ECO:0007669"/>
    <property type="project" value="TreeGrafter"/>
</dbReference>
<dbReference type="Gene3D" id="2.40.50.140">
    <property type="entry name" value="Nucleic acid-binding proteins"/>
    <property type="match status" value="1"/>
</dbReference>
<dbReference type="Gene3D" id="1.20.1440.120">
    <property type="entry name" value="Recombination protein O, C-terminal domain"/>
    <property type="match status" value="1"/>
</dbReference>
<dbReference type="HAMAP" id="MF_00201">
    <property type="entry name" value="RecO"/>
    <property type="match status" value="1"/>
</dbReference>
<dbReference type="InterPro" id="IPR037278">
    <property type="entry name" value="ARFGAP/RecO"/>
</dbReference>
<dbReference type="InterPro" id="IPR022572">
    <property type="entry name" value="DNA_rep/recomb_RecO_N"/>
</dbReference>
<dbReference type="InterPro" id="IPR012340">
    <property type="entry name" value="NA-bd_OB-fold"/>
</dbReference>
<dbReference type="InterPro" id="IPR003717">
    <property type="entry name" value="RecO"/>
</dbReference>
<dbReference type="InterPro" id="IPR042242">
    <property type="entry name" value="RecO_C"/>
</dbReference>
<dbReference type="NCBIfam" id="TIGR00613">
    <property type="entry name" value="reco"/>
    <property type="match status" value="1"/>
</dbReference>
<dbReference type="PANTHER" id="PTHR33991">
    <property type="entry name" value="DNA REPAIR PROTEIN RECO"/>
    <property type="match status" value="1"/>
</dbReference>
<dbReference type="PANTHER" id="PTHR33991:SF1">
    <property type="entry name" value="DNA REPAIR PROTEIN RECO"/>
    <property type="match status" value="1"/>
</dbReference>
<dbReference type="Pfam" id="PF02565">
    <property type="entry name" value="RecO_C"/>
    <property type="match status" value="1"/>
</dbReference>
<dbReference type="Pfam" id="PF11967">
    <property type="entry name" value="RecO_N"/>
    <property type="match status" value="1"/>
</dbReference>
<dbReference type="SUPFAM" id="SSF57863">
    <property type="entry name" value="ArfGap/RecO-like zinc finger"/>
    <property type="match status" value="1"/>
</dbReference>
<dbReference type="SUPFAM" id="SSF50249">
    <property type="entry name" value="Nucleic acid-binding proteins"/>
    <property type="match status" value="1"/>
</dbReference>
<accession>C1KVA7</accession>
<evidence type="ECO:0000255" key="1">
    <source>
        <dbReference type="HAMAP-Rule" id="MF_00201"/>
    </source>
</evidence>
<gene>
    <name evidence="1" type="primary">recO</name>
    <name type="ordered locus">Lm4b_01470</name>
</gene>
<comment type="function">
    <text evidence="1">Involved in DNA repair and RecF pathway recombination.</text>
</comment>
<comment type="similarity">
    <text evidence="1">Belongs to the RecO family.</text>
</comment>
<feature type="chain" id="PRO_1000204106" description="DNA repair protein RecO">
    <location>
        <begin position="1"/>
        <end position="255"/>
    </location>
</feature>
<proteinExistence type="inferred from homology"/>